<comment type="function">
    <text evidence="3 5 7">Inhibits the activity of dimeric NF-kappa-B/REL complexes by trapping REL (RELA/p65 and NFKB1/p50) dimers in the cytoplasm by masking their nuclear localization signals (PubMed:10097128, PubMed:9990853). On cellular stimulation by immune and pro-inflammatory responses, becomes phosphorylated promoting ubiquitination and degradation, enabling the dimeric RELA to translocate to the nucleus and activate transcription (PubMed:10097128, PubMed:7878466, PubMed:9990853).</text>
</comment>
<comment type="subunit">
    <text evidence="1">Interacts with RELA; the interaction requires the nuclear import signal (By similarity). Part of a 70-90 kDa complex at least consisting of CHUK, IKBKB, NFKBIA, RELA, ELP1 and MAP3K14 (By similarity). Interacts with NKIRAS1 and NKIRAS2 (By similarity). Interacts with RWDD3; the interaction enhances sumoylation (By similarity). Interacts with PRMT2 (By similarity). Interacts with PRKACA in platelets; this interaction is disrupted by thrombin and collagen (By similarity). Interacts with MEFV (By similarity). Interacts with DDRGK1; positively regulates NFKBIA phosphorylation and degradation (By similarity). Interacts with HNRNPA2B1; the interaction may be mediated by the RRM2 domain of HNRNPA2B1, and HNRNPA2B1 may interact simultaneously with FAM76B and either NFKBIA or NFKBIE to form a complex (By similarity).</text>
</comment>
<comment type="interaction">
    <interactant intactId="EBI-644427">
        <id>Q9Z1E3</id>
    </interactant>
    <interactant intactId="EBI-302263">
        <id>O88895</id>
        <label>Hdac3</label>
    </interactant>
    <organismsDiffer>false</organismsDiffer>
    <experiments>2</experiments>
</comment>
<comment type="interaction">
    <interactant intactId="EBI-644427">
        <id>Q9Z1E3</id>
    </interactant>
    <interactant intactId="EBI-644400">
        <id>Q04207</id>
        <label>Rela</label>
    </interactant>
    <organismsDiffer>false</organismsDiffer>
    <experiments>9</experiments>
</comment>
<comment type="interaction">
    <interactant intactId="EBI-644427">
        <id>Q9Z1E3</id>
    </interactant>
    <interactant intactId="EBI-1209145">
        <id>Q04863</id>
        <label>Relb</label>
    </interactant>
    <organismsDiffer>false</organismsDiffer>
    <experiments>4</experiments>
</comment>
<comment type="subcellular location">
    <subcellularLocation>
        <location evidence="1">Cytoplasm</location>
    </subcellularLocation>
    <subcellularLocation>
        <location evidence="1">Nucleus</location>
    </subcellularLocation>
    <text evidence="1">Shuttles between the nucleus and the cytoplasm by a nuclear localization signal (NLS) and a CRM1-dependent nuclear export.</text>
</comment>
<comment type="tissue specificity">
    <text evidence="4">Highly expressed in lymph node, thymus followed by liver, brain, muscle, kidney, gastrointestinal and reproductive tract.</text>
</comment>
<comment type="PTM">
    <text evidence="3 5 6 7">Phosphorylated at Ser-32 and Ser-36 by IKKA/CHUK and IKKB/IKBKB; disables inhibition of NF-kappa-B DNA-binding activity (PubMed:10097128, PubMed:7878466, PubMed:9859996, PubMed:9990853). Phosphorylation at positions 32 and 36 is prerequisite to recognition by the SCF(FBXW11) and SCF(BTRC) complexes, leading to polyubiquitination and subsequent degradation (PubMed:10097128, PubMed:9859996).</text>
</comment>
<comment type="PTM">
    <text evidence="1 7">Polyubiquitinated at Lys-21 and/or Lys-22 following phosphorylation at Ser-32 and Ser-36 (PubMed:9990853). Monoubiquitinated at Lys-21 and/or Lys-22 by UBE2D3 (By similarity). Ubiquitin chain elongation is then performed by CDC34 in cooperation with the SCF(FBXW11) E3 ligase complex, building ubiquitin chains from the UBE2D3-primed NFKBIA-linked ubiquitin (By similarity). The resulting polyubiquitination leads to protein degradation (By similarity). Also ubiquitinated by the SCF(BTRC) complex following stimulus-dependent phosphorylation at Ser-32 and Ser-36 (By similarity). Deubiquitinated by USP38, leading to NF-kappa-B inhibition (By similarity).</text>
</comment>
<comment type="PTM">
    <text evidence="1">Sumoylated; sumoylation requires the presence of the nuclear import signal. Sumoylation blocks ubiquitination and proteasome-mediated degradation of the protein thereby increasing the protein stability.</text>
</comment>
<comment type="PTM">
    <text evidence="1">Hydroxylated by HIF1AN.</text>
</comment>
<comment type="similarity">
    <text evidence="8">Belongs to the NF-kappa-B inhibitor family.</text>
</comment>
<protein>
    <recommendedName>
        <fullName>NF-kappa-B inhibitor alpha</fullName>
    </recommendedName>
    <alternativeName>
        <fullName>I-kappa-B-alpha</fullName>
        <shortName>IkB-alpha</shortName>
        <shortName>IkappaBalpha</shortName>
    </alternativeName>
</protein>
<evidence type="ECO:0000250" key="1">
    <source>
        <dbReference type="UniProtKB" id="P25963"/>
    </source>
</evidence>
<evidence type="ECO:0000256" key="2">
    <source>
        <dbReference type="SAM" id="MobiDB-lite"/>
    </source>
</evidence>
<evidence type="ECO:0000269" key="3">
    <source>
    </source>
</evidence>
<evidence type="ECO:0000269" key="4">
    <source>
    </source>
</evidence>
<evidence type="ECO:0000269" key="5">
    <source>
    </source>
</evidence>
<evidence type="ECO:0000269" key="6">
    <source>
    </source>
</evidence>
<evidence type="ECO:0000269" key="7">
    <source>
    </source>
</evidence>
<evidence type="ECO:0000305" key="8"/>
<name>IKBA_MOUSE</name>
<feature type="chain" id="PRO_0000067000" description="NF-kappa-B inhibitor alpha">
    <location>
        <begin position="1"/>
        <end position="314"/>
    </location>
</feature>
<feature type="repeat" description="ANK 1">
    <location>
        <begin position="73"/>
        <end position="103"/>
    </location>
</feature>
<feature type="repeat" description="ANK 2">
    <location>
        <begin position="110"/>
        <end position="139"/>
    </location>
</feature>
<feature type="repeat" description="ANK 3">
    <location>
        <begin position="143"/>
        <end position="172"/>
    </location>
</feature>
<feature type="repeat" description="ANK 4">
    <location>
        <begin position="182"/>
        <end position="211"/>
    </location>
</feature>
<feature type="repeat" description="ANK 5">
    <location>
        <begin position="216"/>
        <end position="245"/>
    </location>
</feature>
<feature type="region of interest" description="Disordered" evidence="2">
    <location>
        <begin position="1"/>
        <end position="40"/>
    </location>
</feature>
<feature type="short sequence motif" description="Destruction motif" evidence="1">
    <location>
        <begin position="30"/>
        <end position="36"/>
    </location>
</feature>
<feature type="short sequence motif" description="Nuclear export signal" evidence="1">
    <location>
        <begin position="45"/>
        <end position="54"/>
    </location>
</feature>
<feature type="short sequence motif" description="Nuclear import signal" evidence="1">
    <location>
        <begin position="110"/>
        <end position="120"/>
    </location>
</feature>
<feature type="compositionally biased region" description="Basic and acidic residues" evidence="2">
    <location>
        <begin position="15"/>
        <end position="40"/>
    </location>
</feature>
<feature type="modified residue" description="Phosphoserine; by IKKB" evidence="3 5 6 7">
    <location>
        <position position="32"/>
    </location>
</feature>
<feature type="modified residue" description="Phosphoserine; by IKKA, IKKB, IKKE and TBK1" evidence="5">
    <location>
        <position position="36"/>
    </location>
</feature>
<feature type="modified residue" description="Phosphotyrosine" evidence="1">
    <location>
        <position position="42"/>
    </location>
</feature>
<feature type="modified residue" description="(3S)-3-hydroxyasparagine; by HIF1AN" evidence="1">
    <location>
        <position position="210"/>
    </location>
</feature>
<feature type="modified residue" description="(3S)-3-hydroxyasparagine; by HIF1AN" evidence="1">
    <location>
        <position position="244"/>
    </location>
</feature>
<feature type="modified residue" description="Phosphoserine; by CK2" evidence="1">
    <location>
        <position position="283"/>
    </location>
</feature>
<feature type="modified residue" description="Phosphoserine; by CK2" evidence="1">
    <location>
        <position position="288"/>
    </location>
</feature>
<feature type="modified residue" description="Phosphothreonine; by CK2" evidence="1">
    <location>
        <position position="291"/>
    </location>
</feature>
<feature type="modified residue" description="Phosphoserine; by CK2" evidence="1">
    <location>
        <position position="293"/>
    </location>
</feature>
<feature type="modified residue" description="Phosphothreonine" evidence="1">
    <location>
        <position position="296"/>
    </location>
</feature>
<feature type="cross-link" description="Glycyl lysine isopeptide (Lys-Gly) (interchain with G-Cter in SUMO); alternate" evidence="1">
    <location>
        <position position="21"/>
    </location>
</feature>
<feature type="cross-link" description="Glycyl lysine isopeptide (Lys-Gly) (interchain with G-Cter in ubiquitin); alternate" evidence="7">
    <location>
        <position position="21"/>
    </location>
</feature>
<feature type="cross-link" description="Glycyl lysine isopeptide (Lys-Gly) (interchain with G-Cter in ubiquitin)" evidence="7">
    <location>
        <position position="22"/>
    </location>
</feature>
<feature type="sequence conflict" description="In Ref. 1; BAE30547." evidence="8" ref="1">
    <original>K</original>
    <variation>R</variation>
    <location>
        <position position="132"/>
    </location>
</feature>
<feature type="sequence conflict" description="In Ref. 3; AAD10341." evidence="8" ref="3">
    <original>I</original>
    <variation>T</variation>
    <location>
        <position position="192"/>
    </location>
</feature>
<reference key="1">
    <citation type="journal article" date="2005" name="Science">
        <title>The transcriptional landscape of the mammalian genome.</title>
        <authorList>
            <person name="Carninci P."/>
            <person name="Kasukawa T."/>
            <person name="Katayama S."/>
            <person name="Gough J."/>
            <person name="Frith M.C."/>
            <person name="Maeda N."/>
            <person name="Oyama R."/>
            <person name="Ravasi T."/>
            <person name="Lenhard B."/>
            <person name="Wells C."/>
            <person name="Kodzius R."/>
            <person name="Shimokawa K."/>
            <person name="Bajic V.B."/>
            <person name="Brenner S.E."/>
            <person name="Batalov S."/>
            <person name="Forrest A.R."/>
            <person name="Zavolan M."/>
            <person name="Davis M.J."/>
            <person name="Wilming L.G."/>
            <person name="Aidinis V."/>
            <person name="Allen J.E."/>
            <person name="Ambesi-Impiombato A."/>
            <person name="Apweiler R."/>
            <person name="Aturaliya R.N."/>
            <person name="Bailey T.L."/>
            <person name="Bansal M."/>
            <person name="Baxter L."/>
            <person name="Beisel K.W."/>
            <person name="Bersano T."/>
            <person name="Bono H."/>
            <person name="Chalk A.M."/>
            <person name="Chiu K.P."/>
            <person name="Choudhary V."/>
            <person name="Christoffels A."/>
            <person name="Clutterbuck D.R."/>
            <person name="Crowe M.L."/>
            <person name="Dalla E."/>
            <person name="Dalrymple B.P."/>
            <person name="de Bono B."/>
            <person name="Della Gatta G."/>
            <person name="di Bernardo D."/>
            <person name="Down T."/>
            <person name="Engstrom P."/>
            <person name="Fagiolini M."/>
            <person name="Faulkner G."/>
            <person name="Fletcher C.F."/>
            <person name="Fukushima T."/>
            <person name="Furuno M."/>
            <person name="Futaki S."/>
            <person name="Gariboldi M."/>
            <person name="Georgii-Hemming P."/>
            <person name="Gingeras T.R."/>
            <person name="Gojobori T."/>
            <person name="Green R.E."/>
            <person name="Gustincich S."/>
            <person name="Harbers M."/>
            <person name="Hayashi Y."/>
            <person name="Hensch T.K."/>
            <person name="Hirokawa N."/>
            <person name="Hill D."/>
            <person name="Huminiecki L."/>
            <person name="Iacono M."/>
            <person name="Ikeo K."/>
            <person name="Iwama A."/>
            <person name="Ishikawa T."/>
            <person name="Jakt M."/>
            <person name="Kanapin A."/>
            <person name="Katoh M."/>
            <person name="Kawasawa Y."/>
            <person name="Kelso J."/>
            <person name="Kitamura H."/>
            <person name="Kitano H."/>
            <person name="Kollias G."/>
            <person name="Krishnan S.P."/>
            <person name="Kruger A."/>
            <person name="Kummerfeld S.K."/>
            <person name="Kurochkin I.V."/>
            <person name="Lareau L.F."/>
            <person name="Lazarevic D."/>
            <person name="Lipovich L."/>
            <person name="Liu J."/>
            <person name="Liuni S."/>
            <person name="McWilliam S."/>
            <person name="Madan Babu M."/>
            <person name="Madera M."/>
            <person name="Marchionni L."/>
            <person name="Matsuda H."/>
            <person name="Matsuzawa S."/>
            <person name="Miki H."/>
            <person name="Mignone F."/>
            <person name="Miyake S."/>
            <person name="Morris K."/>
            <person name="Mottagui-Tabar S."/>
            <person name="Mulder N."/>
            <person name="Nakano N."/>
            <person name="Nakauchi H."/>
            <person name="Ng P."/>
            <person name="Nilsson R."/>
            <person name="Nishiguchi S."/>
            <person name="Nishikawa S."/>
            <person name="Nori F."/>
            <person name="Ohara O."/>
            <person name="Okazaki Y."/>
            <person name="Orlando V."/>
            <person name="Pang K.C."/>
            <person name="Pavan W.J."/>
            <person name="Pavesi G."/>
            <person name="Pesole G."/>
            <person name="Petrovsky N."/>
            <person name="Piazza S."/>
            <person name="Reed J."/>
            <person name="Reid J.F."/>
            <person name="Ring B.Z."/>
            <person name="Ringwald M."/>
            <person name="Rost B."/>
            <person name="Ruan Y."/>
            <person name="Salzberg S.L."/>
            <person name="Sandelin A."/>
            <person name="Schneider C."/>
            <person name="Schoenbach C."/>
            <person name="Sekiguchi K."/>
            <person name="Semple C.A."/>
            <person name="Seno S."/>
            <person name="Sessa L."/>
            <person name="Sheng Y."/>
            <person name="Shibata Y."/>
            <person name="Shimada H."/>
            <person name="Shimada K."/>
            <person name="Silva D."/>
            <person name="Sinclair B."/>
            <person name="Sperling S."/>
            <person name="Stupka E."/>
            <person name="Sugiura K."/>
            <person name="Sultana R."/>
            <person name="Takenaka Y."/>
            <person name="Taki K."/>
            <person name="Tammoja K."/>
            <person name="Tan S.L."/>
            <person name="Tang S."/>
            <person name="Taylor M.S."/>
            <person name="Tegner J."/>
            <person name="Teichmann S.A."/>
            <person name="Ueda H.R."/>
            <person name="van Nimwegen E."/>
            <person name="Verardo R."/>
            <person name="Wei C.L."/>
            <person name="Yagi K."/>
            <person name="Yamanishi H."/>
            <person name="Zabarovsky E."/>
            <person name="Zhu S."/>
            <person name="Zimmer A."/>
            <person name="Hide W."/>
            <person name="Bult C."/>
            <person name="Grimmond S.M."/>
            <person name="Teasdale R.D."/>
            <person name="Liu E.T."/>
            <person name="Brusic V."/>
            <person name="Quackenbush J."/>
            <person name="Wahlestedt C."/>
            <person name="Mattick J.S."/>
            <person name="Hume D.A."/>
            <person name="Kai C."/>
            <person name="Sasaki D."/>
            <person name="Tomaru Y."/>
            <person name="Fukuda S."/>
            <person name="Kanamori-Katayama M."/>
            <person name="Suzuki M."/>
            <person name="Aoki J."/>
            <person name="Arakawa T."/>
            <person name="Iida J."/>
            <person name="Imamura K."/>
            <person name="Itoh M."/>
            <person name="Kato T."/>
            <person name="Kawaji H."/>
            <person name="Kawagashira N."/>
            <person name="Kawashima T."/>
            <person name="Kojima M."/>
            <person name="Kondo S."/>
            <person name="Konno H."/>
            <person name="Nakano K."/>
            <person name="Ninomiya N."/>
            <person name="Nishio T."/>
            <person name="Okada M."/>
            <person name="Plessy C."/>
            <person name="Shibata K."/>
            <person name="Shiraki T."/>
            <person name="Suzuki S."/>
            <person name="Tagami M."/>
            <person name="Waki K."/>
            <person name="Watahiki A."/>
            <person name="Okamura-Oho Y."/>
            <person name="Suzuki H."/>
            <person name="Kawai J."/>
            <person name="Hayashizaki Y."/>
        </authorList>
    </citation>
    <scope>NUCLEOTIDE SEQUENCE [LARGE SCALE MRNA]</scope>
    <source>
        <strain>C57BL/6J</strain>
        <tissue>Bone marrow</tissue>
    </source>
</reference>
<reference key="2">
    <citation type="journal article" date="2004" name="Genome Res.">
        <title>The status, quality, and expansion of the NIH full-length cDNA project: the Mammalian Gene Collection (MGC).</title>
        <authorList>
            <consortium name="The MGC Project Team"/>
        </authorList>
    </citation>
    <scope>NUCLEOTIDE SEQUENCE [LARGE SCALE MRNA]</scope>
    <source>
        <strain>C57BL/6J</strain>
        <tissue>Brain</tissue>
    </source>
</reference>
<reference key="3">
    <citation type="journal article" date="1999" name="Immunogenetics">
        <title>Structural analysis, expression, and chromosomal localization of the mouse ikba gene.</title>
        <authorList>
            <person name="Rupec R.A."/>
            <person name="Poujol D."/>
            <person name="Grosgeorge J."/>
            <person name="Carle G.F."/>
            <person name="Livolsi A."/>
            <person name="Peyron J.-F."/>
            <person name="Schmid R.M."/>
            <person name="Baeuerle P.A."/>
            <person name="Messer G."/>
        </authorList>
    </citation>
    <scope>NUCLEOTIDE SEQUENCE [GENOMIC DNA] OF 77-314</scope>
    <scope>TISSUE SPECIFICITY</scope>
    <source>
        <strain>129/Sv</strain>
        <tissue>Liver</tissue>
    </source>
</reference>
<reference key="4">
    <citation type="journal article" date="1995" name="Science">
        <title>Control of I kappa B-alpha proteolysis by site-specific, signal-induced phosphorylation.</title>
        <authorList>
            <person name="Brown K."/>
            <person name="Gerstberger S."/>
            <person name="Carlson L."/>
            <person name="Franzoso G."/>
            <person name="Siebenlist U."/>
        </authorList>
    </citation>
    <scope>FUNCTION</scope>
    <scope>PHOSPHORYLATION AT SER-32 AND SER-36</scope>
</reference>
<reference key="5">
    <citation type="journal article" date="1998" name="Nature">
        <title>Identification of the receptor component of the IkappaBalpha-ubiquitin ligase.</title>
        <authorList>
            <person name="Yaron A."/>
            <person name="Hatzubai A."/>
            <person name="Davis M."/>
            <person name="Lavon I."/>
            <person name="Amit S."/>
            <person name="Manning A.M."/>
            <person name="Andersen J.S."/>
            <person name="Mann M."/>
            <person name="Mercurio F."/>
            <person name="Ben-Neriah Y."/>
        </authorList>
    </citation>
    <scope>PHOSPHORYLATION AT SER-32 AND SER-36</scope>
    <scope>UBIQUITINATION</scope>
</reference>
<reference key="6">
    <citation type="journal article" date="1999" name="Genes Dev.">
        <title>Signal-induced ubiquitination of IkappaBalpha by the F-box protein Slimb/beta-TrCP.</title>
        <authorList>
            <person name="Spencer E."/>
            <person name="Jiang J."/>
            <person name="Chen Z.J."/>
        </authorList>
    </citation>
    <scope>FUNCTION</scope>
    <scope>PHOSPHORYLATION AT SER-32 AND SER-36</scope>
    <scope>UBIQUITINATION AT LYS-21 AND LYS-22</scope>
</reference>
<reference key="7">
    <citation type="journal article" date="1999" name="Proc. Natl. Acad. Sci. U.S.A.">
        <title>Ubiquitin-dependent degradation of IkappaBalpha is mediated by a ubiquitin ligase Skp1/Cul 1/F-box protein FWD1.</title>
        <authorList>
            <person name="Hatakeyama S."/>
            <person name="Kitagawa M."/>
            <person name="Nakayama K."/>
            <person name="Shirane M."/>
            <person name="Matsumoto M."/>
            <person name="Hattori K."/>
            <person name="Higashi H."/>
            <person name="Nakano H."/>
            <person name="Okumura K."/>
            <person name="Onoe K."/>
            <person name="Good R.A."/>
            <person name="Nakayama K."/>
        </authorList>
    </citation>
    <scope>FUNCTION</scope>
    <scope>PHOSPHORYLATION AT SER-32 AND SER-36</scope>
    <scope>UBIQUITINATION</scope>
</reference>
<reference key="8">
    <citation type="journal article" date="2010" name="Cell">
        <title>A tissue-specific atlas of mouse protein phosphorylation and expression.</title>
        <authorList>
            <person name="Huttlin E.L."/>
            <person name="Jedrychowski M.P."/>
            <person name="Elias J.E."/>
            <person name="Goswami T."/>
            <person name="Rad R."/>
            <person name="Beausoleil S.A."/>
            <person name="Villen J."/>
            <person name="Haas W."/>
            <person name="Sowa M.E."/>
            <person name="Gygi S.P."/>
        </authorList>
    </citation>
    <scope>IDENTIFICATION BY MASS SPECTROMETRY [LARGE SCALE ANALYSIS]</scope>
    <source>
        <tissue>Heart</tissue>
        <tissue>Lung</tissue>
        <tissue>Spleen</tissue>
    </source>
</reference>
<dbReference type="EMBL" id="AK151115">
    <property type="protein sequence ID" value="BAE30124.1"/>
    <property type="molecule type" value="mRNA"/>
</dbReference>
<dbReference type="EMBL" id="AK151608">
    <property type="protein sequence ID" value="BAE30547.1"/>
    <property type="molecule type" value="mRNA"/>
</dbReference>
<dbReference type="EMBL" id="BC046754">
    <property type="protein sequence ID" value="AAH46754.1"/>
    <property type="molecule type" value="mRNA"/>
</dbReference>
<dbReference type="EMBL" id="U57524">
    <property type="protein sequence ID" value="AAD10341.1"/>
    <property type="molecule type" value="Genomic_DNA"/>
</dbReference>
<dbReference type="CCDS" id="CCDS25918.1"/>
<dbReference type="RefSeq" id="NP_035037.2">
    <property type="nucleotide sequence ID" value="NM_010907.2"/>
</dbReference>
<dbReference type="SMR" id="Q9Z1E3"/>
<dbReference type="BioGRID" id="201753">
    <property type="interactions" value="15"/>
</dbReference>
<dbReference type="CORUM" id="Q9Z1E3"/>
<dbReference type="DIP" id="DIP-36160N"/>
<dbReference type="FunCoup" id="Q9Z1E3">
    <property type="interactions" value="1190"/>
</dbReference>
<dbReference type="IntAct" id="Q9Z1E3">
    <property type="interactions" value="10"/>
</dbReference>
<dbReference type="MINT" id="Q9Z1E3"/>
<dbReference type="STRING" id="10090.ENSMUSP00000021413"/>
<dbReference type="ChEMBL" id="CHEMBL1926493"/>
<dbReference type="iPTMnet" id="Q9Z1E3"/>
<dbReference type="PhosphoSitePlus" id="Q9Z1E3"/>
<dbReference type="SwissPalm" id="Q9Z1E3"/>
<dbReference type="PaxDb" id="10090-ENSMUSP00000021413"/>
<dbReference type="PeptideAtlas" id="Q9Z1E3"/>
<dbReference type="ProteomicsDB" id="267306"/>
<dbReference type="Pumba" id="Q9Z1E3"/>
<dbReference type="Antibodypedia" id="3541">
    <property type="antibodies" value="1897 antibodies from 50 providers"/>
</dbReference>
<dbReference type="DNASU" id="18035"/>
<dbReference type="Ensembl" id="ENSMUST00000021413.9">
    <property type="protein sequence ID" value="ENSMUSP00000021413.8"/>
    <property type="gene ID" value="ENSMUSG00000021025.9"/>
</dbReference>
<dbReference type="GeneID" id="18035"/>
<dbReference type="KEGG" id="mmu:18035"/>
<dbReference type="UCSC" id="uc007nor.2">
    <property type="organism name" value="mouse"/>
</dbReference>
<dbReference type="AGR" id="MGI:104741"/>
<dbReference type="CTD" id="4792"/>
<dbReference type="MGI" id="MGI:104741">
    <property type="gene designation" value="Nfkbia"/>
</dbReference>
<dbReference type="VEuPathDB" id="HostDB:ENSMUSG00000021025"/>
<dbReference type="eggNOG" id="KOG0504">
    <property type="taxonomic scope" value="Eukaryota"/>
</dbReference>
<dbReference type="GeneTree" id="ENSGT00940000162733"/>
<dbReference type="HOGENOM" id="CLU_000134_6_3_1"/>
<dbReference type="InParanoid" id="Q9Z1E3"/>
<dbReference type="OMA" id="RGSMACF"/>
<dbReference type="OrthoDB" id="20727at2759"/>
<dbReference type="PhylomeDB" id="Q9Z1E3"/>
<dbReference type="TreeFam" id="TF320166"/>
<dbReference type="Reactome" id="R-MMU-1169091">
    <property type="pathway name" value="Activation of NF-kappaB in B cells"/>
</dbReference>
<dbReference type="Reactome" id="R-MMU-1810476">
    <property type="pathway name" value="RIP-mediated NFkB activation via ZBP1"/>
</dbReference>
<dbReference type="Reactome" id="R-MMU-202424">
    <property type="pathway name" value="Downstream TCR signaling"/>
</dbReference>
<dbReference type="Reactome" id="R-MMU-209560">
    <property type="pathway name" value="NF-kB is activated and signals survival"/>
</dbReference>
<dbReference type="Reactome" id="R-MMU-2871837">
    <property type="pathway name" value="FCERI mediated NF-kB activation"/>
</dbReference>
<dbReference type="Reactome" id="R-MMU-445989">
    <property type="pathway name" value="TAK1-dependent IKK and NF-kappa-B activation"/>
</dbReference>
<dbReference type="Reactome" id="R-MMU-4755510">
    <property type="pathway name" value="SUMOylation of immune response proteins"/>
</dbReference>
<dbReference type="Reactome" id="R-MMU-5607764">
    <property type="pathway name" value="CLEC7A (Dectin-1) signaling"/>
</dbReference>
<dbReference type="Reactome" id="R-MMU-5689880">
    <property type="pathway name" value="Ub-specific processing proteases"/>
</dbReference>
<dbReference type="Reactome" id="R-MMU-9020702">
    <property type="pathway name" value="Interleukin-1 signaling"/>
</dbReference>
<dbReference type="Reactome" id="R-MMU-933542">
    <property type="pathway name" value="TRAF6 mediated NF-kB activation"/>
</dbReference>
<dbReference type="Reactome" id="R-MMU-9860927">
    <property type="pathway name" value="Turbulent (oscillatory, disturbed) flow shear stress activates signaling by PIEZO1 and integrins in endothelial cells"/>
</dbReference>
<dbReference type="BioGRID-ORCS" id="18035">
    <property type="hits" value="6 hits in 80 CRISPR screens"/>
</dbReference>
<dbReference type="ChiTaRS" id="Nfkbia">
    <property type="organism name" value="mouse"/>
</dbReference>
<dbReference type="PRO" id="PR:Q9Z1E3"/>
<dbReference type="Proteomes" id="UP000000589">
    <property type="component" value="Chromosome 12"/>
</dbReference>
<dbReference type="RNAct" id="Q9Z1E3">
    <property type="molecule type" value="protein"/>
</dbReference>
<dbReference type="Bgee" id="ENSMUSG00000021025">
    <property type="expression patterns" value="Expressed in peripheral lymph node and 274 other cell types or tissues"/>
</dbReference>
<dbReference type="GO" id="GO:0005737">
    <property type="term" value="C:cytoplasm"/>
    <property type="evidence" value="ECO:0000314"/>
    <property type="project" value="MGI"/>
</dbReference>
<dbReference type="GO" id="GO:0005829">
    <property type="term" value="C:cytosol"/>
    <property type="evidence" value="ECO:0000314"/>
    <property type="project" value="MGI"/>
</dbReference>
<dbReference type="GO" id="GO:0033256">
    <property type="term" value="C:I-kappaB/NF-kappaB complex"/>
    <property type="evidence" value="ECO:0007669"/>
    <property type="project" value="Ensembl"/>
</dbReference>
<dbReference type="GO" id="GO:0005634">
    <property type="term" value="C:nucleus"/>
    <property type="evidence" value="ECO:0000314"/>
    <property type="project" value="MGI"/>
</dbReference>
<dbReference type="GO" id="GO:0005886">
    <property type="term" value="C:plasma membrane"/>
    <property type="evidence" value="ECO:0007669"/>
    <property type="project" value="Ensembl"/>
</dbReference>
<dbReference type="GO" id="GO:0042802">
    <property type="term" value="F:identical protein binding"/>
    <property type="evidence" value="ECO:0007669"/>
    <property type="project" value="Ensembl"/>
</dbReference>
<dbReference type="GO" id="GO:0051059">
    <property type="term" value="F:NF-kappaB binding"/>
    <property type="evidence" value="ECO:0000250"/>
    <property type="project" value="UniProtKB"/>
</dbReference>
<dbReference type="GO" id="GO:0008139">
    <property type="term" value="F:nuclear localization sequence binding"/>
    <property type="evidence" value="ECO:0007669"/>
    <property type="project" value="Ensembl"/>
</dbReference>
<dbReference type="GO" id="GO:0140311">
    <property type="term" value="F:protein sequestering activity"/>
    <property type="evidence" value="ECO:0000250"/>
    <property type="project" value="UniProtKB"/>
</dbReference>
<dbReference type="GO" id="GO:0140416">
    <property type="term" value="F:transcription regulator inhibitor activity"/>
    <property type="evidence" value="ECO:0000314"/>
    <property type="project" value="MGI"/>
</dbReference>
<dbReference type="GO" id="GO:0031625">
    <property type="term" value="F:ubiquitin protein ligase binding"/>
    <property type="evidence" value="ECO:0007669"/>
    <property type="project" value="Ensembl"/>
</dbReference>
<dbReference type="GO" id="GO:0050853">
    <property type="term" value="P:B cell receptor signaling pathway"/>
    <property type="evidence" value="ECO:0000314"/>
    <property type="project" value="MGI"/>
</dbReference>
<dbReference type="GO" id="GO:0007249">
    <property type="term" value="P:canonical NF-kappaB signal transduction"/>
    <property type="evidence" value="ECO:0007669"/>
    <property type="project" value="Ensembl"/>
</dbReference>
<dbReference type="GO" id="GO:0071345">
    <property type="term" value="P:cellular response to cytokine stimulus"/>
    <property type="evidence" value="ECO:0000266"/>
    <property type="project" value="MGI"/>
</dbReference>
<dbReference type="GO" id="GO:0071356">
    <property type="term" value="P:cellular response to tumor necrosis factor"/>
    <property type="evidence" value="ECO:0000314"/>
    <property type="project" value="MGI"/>
</dbReference>
<dbReference type="GO" id="GO:0070498">
    <property type="term" value="P:interleukin-1-mediated signaling pathway"/>
    <property type="evidence" value="ECO:0007669"/>
    <property type="project" value="Ensembl"/>
</dbReference>
<dbReference type="GO" id="GO:0031663">
    <property type="term" value="P:lipopolysaccharide-mediated signaling pathway"/>
    <property type="evidence" value="ECO:0000314"/>
    <property type="project" value="MGI"/>
</dbReference>
<dbReference type="GO" id="GO:0043124">
    <property type="term" value="P:negative regulation of canonical NF-kappaB signal transduction"/>
    <property type="evidence" value="ECO:0000314"/>
    <property type="project" value="MGI"/>
</dbReference>
<dbReference type="GO" id="GO:0032375">
    <property type="term" value="P:negative regulation of cholesterol transport"/>
    <property type="evidence" value="ECO:0007669"/>
    <property type="project" value="Ensembl"/>
</dbReference>
<dbReference type="GO" id="GO:1900016">
    <property type="term" value="P:negative regulation of cytokine production involved in inflammatory response"/>
    <property type="evidence" value="ECO:0007669"/>
    <property type="project" value="Ensembl"/>
</dbReference>
<dbReference type="GO" id="GO:0010888">
    <property type="term" value="P:negative regulation of lipid storage"/>
    <property type="evidence" value="ECO:0007669"/>
    <property type="project" value="Ensembl"/>
</dbReference>
<dbReference type="GO" id="GO:0010745">
    <property type="term" value="P:negative regulation of macrophage derived foam cell differentiation"/>
    <property type="evidence" value="ECO:0007669"/>
    <property type="project" value="Ensembl"/>
</dbReference>
<dbReference type="GO" id="GO:0045638">
    <property type="term" value="P:negative regulation of myeloid cell differentiation"/>
    <property type="evidence" value="ECO:0000315"/>
    <property type="project" value="MGI"/>
</dbReference>
<dbReference type="GO" id="GO:0045746">
    <property type="term" value="P:negative regulation of Notch signaling pathway"/>
    <property type="evidence" value="ECO:0000315"/>
    <property type="project" value="MGI"/>
</dbReference>
<dbReference type="GO" id="GO:0042308">
    <property type="term" value="P:negative regulation of protein import into nucleus"/>
    <property type="evidence" value="ECO:0007669"/>
    <property type="project" value="Ensembl"/>
</dbReference>
<dbReference type="GO" id="GO:0000122">
    <property type="term" value="P:negative regulation of transcription by RNA polymerase II"/>
    <property type="evidence" value="ECO:0007669"/>
    <property type="project" value="Ensembl"/>
</dbReference>
<dbReference type="GO" id="GO:0038061">
    <property type="term" value="P:non-canonical NF-kappaB signal transduction"/>
    <property type="evidence" value="ECO:0007669"/>
    <property type="project" value="Ensembl"/>
</dbReference>
<dbReference type="GO" id="GO:0007219">
    <property type="term" value="P:Notch signaling pathway"/>
    <property type="evidence" value="ECO:0000315"/>
    <property type="project" value="MGI"/>
</dbReference>
<dbReference type="GO" id="GO:0070427">
    <property type="term" value="P:nucleotide-binding oligomerization domain containing 1 signaling pathway"/>
    <property type="evidence" value="ECO:0000314"/>
    <property type="project" value="MGI"/>
</dbReference>
<dbReference type="GO" id="GO:0070431">
    <property type="term" value="P:nucleotide-binding oligomerization domain containing 2 signaling pathway"/>
    <property type="evidence" value="ECO:0000314"/>
    <property type="project" value="MGI"/>
</dbReference>
<dbReference type="GO" id="GO:0045893">
    <property type="term" value="P:positive regulation of DNA-templated transcription"/>
    <property type="evidence" value="ECO:0000315"/>
    <property type="project" value="MGI"/>
</dbReference>
<dbReference type="GO" id="GO:0050729">
    <property type="term" value="P:positive regulation of inflammatory response"/>
    <property type="evidence" value="ECO:0007669"/>
    <property type="project" value="Ensembl"/>
</dbReference>
<dbReference type="GO" id="GO:0060261">
    <property type="term" value="P:positive regulation of transcription initiation by RNA polymerase II"/>
    <property type="evidence" value="ECO:0000315"/>
    <property type="project" value="MGI"/>
</dbReference>
<dbReference type="GO" id="GO:0006606">
    <property type="term" value="P:protein import into nucleus"/>
    <property type="evidence" value="ECO:0000314"/>
    <property type="project" value="MGI"/>
</dbReference>
<dbReference type="GO" id="GO:0042127">
    <property type="term" value="P:regulation of cell population proliferation"/>
    <property type="evidence" value="ECO:0000314"/>
    <property type="project" value="MGI"/>
</dbReference>
<dbReference type="GO" id="GO:0010468">
    <property type="term" value="P:regulation of gene expression"/>
    <property type="evidence" value="ECO:0000315"/>
    <property type="project" value="MGI"/>
</dbReference>
<dbReference type="GO" id="GO:0043330">
    <property type="term" value="P:response to exogenous dsRNA"/>
    <property type="evidence" value="ECO:0000314"/>
    <property type="project" value="MGI"/>
</dbReference>
<dbReference type="GO" id="GO:0032496">
    <property type="term" value="P:response to lipopolysaccharide"/>
    <property type="evidence" value="ECO:0000314"/>
    <property type="project" value="MGI"/>
</dbReference>
<dbReference type="GO" id="GO:0032495">
    <property type="term" value="P:response to muramyl dipeptide"/>
    <property type="evidence" value="ECO:0000314"/>
    <property type="project" value="MGI"/>
</dbReference>
<dbReference type="GO" id="GO:0035994">
    <property type="term" value="P:response to muscle stretch"/>
    <property type="evidence" value="ECO:0000314"/>
    <property type="project" value="MGI"/>
</dbReference>
<dbReference type="GO" id="GO:0023019">
    <property type="term" value="P:signal transduction involved in regulation of gene expression"/>
    <property type="evidence" value="ECO:0007669"/>
    <property type="project" value="Ensembl"/>
</dbReference>
<dbReference type="GO" id="GO:0034142">
    <property type="term" value="P:toll-like receptor 4 signaling pathway"/>
    <property type="evidence" value="ECO:0000314"/>
    <property type="project" value="MGI"/>
</dbReference>
<dbReference type="GO" id="GO:0033209">
    <property type="term" value="P:tumor necrosis factor-mediated signaling pathway"/>
    <property type="evidence" value="ECO:0007669"/>
    <property type="project" value="Ensembl"/>
</dbReference>
<dbReference type="FunFam" id="1.25.40.20:FF:000124">
    <property type="entry name" value="NF-kappa-B inhibitor alpha isoform X2"/>
    <property type="match status" value="1"/>
</dbReference>
<dbReference type="Gene3D" id="1.25.40.20">
    <property type="entry name" value="Ankyrin repeat-containing domain"/>
    <property type="match status" value="1"/>
</dbReference>
<dbReference type="InterPro" id="IPR002110">
    <property type="entry name" value="Ankyrin_rpt"/>
</dbReference>
<dbReference type="InterPro" id="IPR036770">
    <property type="entry name" value="Ankyrin_rpt-contain_sf"/>
</dbReference>
<dbReference type="InterPro" id="IPR051070">
    <property type="entry name" value="NF-kappa-B_inhibitor"/>
</dbReference>
<dbReference type="PANTHER" id="PTHR46680">
    <property type="entry name" value="NF-KAPPA-B INHIBITOR ALPHA"/>
    <property type="match status" value="1"/>
</dbReference>
<dbReference type="PANTHER" id="PTHR46680:SF1">
    <property type="entry name" value="NF-KAPPA-B INHIBITOR ALPHA"/>
    <property type="match status" value="1"/>
</dbReference>
<dbReference type="Pfam" id="PF12796">
    <property type="entry name" value="Ank_2"/>
    <property type="match status" value="1"/>
</dbReference>
<dbReference type="Pfam" id="PF13857">
    <property type="entry name" value="Ank_5"/>
    <property type="match status" value="1"/>
</dbReference>
<dbReference type="PRINTS" id="PR01415">
    <property type="entry name" value="ANKYRIN"/>
</dbReference>
<dbReference type="SMART" id="SM00248">
    <property type="entry name" value="ANK"/>
    <property type="match status" value="5"/>
</dbReference>
<dbReference type="SUPFAM" id="SSF48403">
    <property type="entry name" value="Ankyrin repeat"/>
    <property type="match status" value="1"/>
</dbReference>
<dbReference type="PROSITE" id="PS50297">
    <property type="entry name" value="ANK_REP_REGION"/>
    <property type="match status" value="1"/>
</dbReference>
<dbReference type="PROSITE" id="PS50088">
    <property type="entry name" value="ANK_REPEAT"/>
    <property type="match status" value="3"/>
</dbReference>
<organism>
    <name type="scientific">Mus musculus</name>
    <name type="common">Mouse</name>
    <dbReference type="NCBI Taxonomy" id="10090"/>
    <lineage>
        <taxon>Eukaryota</taxon>
        <taxon>Metazoa</taxon>
        <taxon>Chordata</taxon>
        <taxon>Craniata</taxon>
        <taxon>Vertebrata</taxon>
        <taxon>Euteleostomi</taxon>
        <taxon>Mammalia</taxon>
        <taxon>Eutheria</taxon>
        <taxon>Euarchontoglires</taxon>
        <taxon>Glires</taxon>
        <taxon>Rodentia</taxon>
        <taxon>Myomorpha</taxon>
        <taxon>Muroidea</taxon>
        <taxon>Muridae</taxon>
        <taxon>Murinae</taxon>
        <taxon>Mus</taxon>
        <taxon>Mus</taxon>
    </lineage>
</organism>
<accession>Q9Z1E3</accession>
<accession>Q3U9W9</accession>
<accession>Q3UB40</accession>
<accession>Q80ZX5</accession>
<gene>
    <name type="primary">Nfkbia</name>
    <name type="synonym">Ikba</name>
</gene>
<keyword id="KW-0040">ANK repeat</keyword>
<keyword id="KW-0963">Cytoplasm</keyword>
<keyword id="KW-0379">Hydroxylation</keyword>
<keyword id="KW-1017">Isopeptide bond</keyword>
<keyword id="KW-0539">Nucleus</keyword>
<keyword id="KW-0597">Phosphoprotein</keyword>
<keyword id="KW-1185">Reference proteome</keyword>
<keyword id="KW-0677">Repeat</keyword>
<keyword id="KW-0832">Ubl conjugation</keyword>
<sequence length="314" mass="35071">MFQPAGHGQDWAMEGPRDGLKKERLVDDRHDSGLDSMKDEEYEQMVKELREIRLQPQEAPLAAEPWKQQLTEDGDSFLHLAIIHEEKPLTMEVIGQVKGDLAFLNFQNNLQQTPLHLAVITNQPGIAEALLKAGCDPELRDFRGNTPLHLACEQGCLASVAVLTQTCTPQHLHSVLQATNYNGHTCLHLASIHGYLAIVEHLVTLGADVNAQEPCNGRTALHLAVDLQNPDLVSLLLKCGADVNRVTYQGYSPYQLTWGRPSTRIQQQLGQLTLENLQMLPESEDEESYDTESEFTEDELPYDDCVFGGQRLTL</sequence>
<proteinExistence type="evidence at protein level"/>